<dbReference type="EMBL" id="AL123456">
    <property type="protein sequence ID" value="CCP43215.1"/>
    <property type="molecule type" value="Genomic_DNA"/>
</dbReference>
<dbReference type="PIR" id="D70743">
    <property type="entry name" value="D70743"/>
</dbReference>
<dbReference type="RefSeq" id="NP_214995.1">
    <property type="nucleotide sequence ID" value="NC_000962.3"/>
</dbReference>
<dbReference type="RefSeq" id="WP_003402351.1">
    <property type="nucleotide sequence ID" value="NZ_NVQJ01000002.1"/>
</dbReference>
<dbReference type="SMR" id="P9WKV5"/>
<dbReference type="STRING" id="83332.Rv0481c"/>
<dbReference type="PaxDb" id="83332-Rv0481c"/>
<dbReference type="DNASU" id="887161"/>
<dbReference type="GeneID" id="887161"/>
<dbReference type="KEGG" id="mtu:Rv0481c"/>
<dbReference type="KEGG" id="mtv:RVBD_0481c"/>
<dbReference type="TubercuList" id="Rv0481c"/>
<dbReference type="eggNOG" id="COG3832">
    <property type="taxonomic scope" value="Bacteria"/>
</dbReference>
<dbReference type="InParanoid" id="P9WKV5"/>
<dbReference type="OrthoDB" id="5178774at2"/>
<dbReference type="Proteomes" id="UP000001584">
    <property type="component" value="Chromosome"/>
</dbReference>
<dbReference type="GO" id="GO:0005886">
    <property type="term" value="C:plasma membrane"/>
    <property type="evidence" value="ECO:0007005"/>
    <property type="project" value="MTBBASE"/>
</dbReference>
<dbReference type="GO" id="GO:0051701">
    <property type="term" value="P:biological process involved in interaction with host"/>
    <property type="evidence" value="ECO:0000315"/>
    <property type="project" value="MTBBASE"/>
</dbReference>
<dbReference type="Gene3D" id="3.30.530.20">
    <property type="match status" value="1"/>
</dbReference>
<dbReference type="InterPro" id="IPR019639">
    <property type="entry name" value="DUF2505"/>
</dbReference>
<dbReference type="InterPro" id="IPR023393">
    <property type="entry name" value="START-like_dom_sf"/>
</dbReference>
<dbReference type="Pfam" id="PF10698">
    <property type="entry name" value="DUF2505"/>
    <property type="match status" value="1"/>
</dbReference>
<accession>P9WKV5</accession>
<accession>L0T3Q9</accession>
<accession>P64701</accession>
<accession>Q11147</accession>
<organism>
    <name type="scientific">Mycobacterium tuberculosis (strain ATCC 25618 / H37Rv)</name>
    <dbReference type="NCBI Taxonomy" id="83332"/>
    <lineage>
        <taxon>Bacteria</taxon>
        <taxon>Bacillati</taxon>
        <taxon>Actinomycetota</taxon>
        <taxon>Actinomycetes</taxon>
        <taxon>Mycobacteriales</taxon>
        <taxon>Mycobacteriaceae</taxon>
        <taxon>Mycobacterium</taxon>
        <taxon>Mycobacterium tuberculosis complex</taxon>
    </lineage>
</organism>
<feature type="chain" id="PRO_0000103683" description="Uncharacterized protein Rv0481c">
    <location>
        <begin position="1"/>
        <end position="174"/>
    </location>
</feature>
<name>Y481_MYCTU</name>
<sequence>MPRSFDMSADYEGSVEEVHRAFYEADYWKARLAETPVDVATLESIRVGGDSGDDGTIEVVTLQMVRSHNLPGLVTQLHRGDLSVRREETWGPVKEGIATASIAGSIVDAPVNLWGTAVLSPIPESGGSRMTLQVTIQVRIPFIGGKLERLIGTQLSQLVTIEQRFTTLWITNNV</sequence>
<gene>
    <name type="ordered locus">Rv0481c</name>
    <name type="ORF">MTCY20G9.07c</name>
</gene>
<keyword id="KW-1185">Reference proteome</keyword>
<protein>
    <recommendedName>
        <fullName>Uncharacterized protein Rv0481c</fullName>
    </recommendedName>
</protein>
<proteinExistence type="evidence at protein level"/>
<reference key="1">
    <citation type="journal article" date="1998" name="Nature">
        <title>Deciphering the biology of Mycobacterium tuberculosis from the complete genome sequence.</title>
        <authorList>
            <person name="Cole S.T."/>
            <person name="Brosch R."/>
            <person name="Parkhill J."/>
            <person name="Garnier T."/>
            <person name="Churcher C.M."/>
            <person name="Harris D.E."/>
            <person name="Gordon S.V."/>
            <person name="Eiglmeier K."/>
            <person name="Gas S."/>
            <person name="Barry C.E. III"/>
            <person name="Tekaia F."/>
            <person name="Badcock K."/>
            <person name="Basham D."/>
            <person name="Brown D."/>
            <person name="Chillingworth T."/>
            <person name="Connor R."/>
            <person name="Davies R.M."/>
            <person name="Devlin K."/>
            <person name="Feltwell T."/>
            <person name="Gentles S."/>
            <person name="Hamlin N."/>
            <person name="Holroyd S."/>
            <person name="Hornsby T."/>
            <person name="Jagels K."/>
            <person name="Krogh A."/>
            <person name="McLean J."/>
            <person name="Moule S."/>
            <person name="Murphy L.D."/>
            <person name="Oliver S."/>
            <person name="Osborne J."/>
            <person name="Quail M.A."/>
            <person name="Rajandream M.A."/>
            <person name="Rogers J."/>
            <person name="Rutter S."/>
            <person name="Seeger K."/>
            <person name="Skelton S."/>
            <person name="Squares S."/>
            <person name="Squares R."/>
            <person name="Sulston J.E."/>
            <person name="Taylor K."/>
            <person name="Whitehead S."/>
            <person name="Barrell B.G."/>
        </authorList>
    </citation>
    <scope>NUCLEOTIDE SEQUENCE [LARGE SCALE GENOMIC DNA]</scope>
    <source>
        <strain>ATCC 25618 / H37Rv</strain>
    </source>
</reference>
<reference key="2">
    <citation type="journal article" date="2011" name="Mol. Cell. Proteomics">
        <title>Proteogenomic analysis of Mycobacterium tuberculosis by high resolution mass spectrometry.</title>
        <authorList>
            <person name="Kelkar D.S."/>
            <person name="Kumar D."/>
            <person name="Kumar P."/>
            <person name="Balakrishnan L."/>
            <person name="Muthusamy B."/>
            <person name="Yadav A.K."/>
            <person name="Shrivastava P."/>
            <person name="Marimuthu A."/>
            <person name="Anand S."/>
            <person name="Sundaram H."/>
            <person name="Kingsbury R."/>
            <person name="Harsha H.C."/>
            <person name="Nair B."/>
            <person name="Prasad T.S."/>
            <person name="Chauhan D.S."/>
            <person name="Katoch K."/>
            <person name="Katoch V.M."/>
            <person name="Kumar P."/>
            <person name="Chaerkady R."/>
            <person name="Ramachandran S."/>
            <person name="Dash D."/>
            <person name="Pandey A."/>
        </authorList>
    </citation>
    <scope>IDENTIFICATION BY MASS SPECTROMETRY [LARGE SCALE ANALYSIS]</scope>
    <source>
        <strain>ATCC 25618 / H37Rv</strain>
    </source>
</reference>